<proteinExistence type="inferred from homology"/>
<reference key="1">
    <citation type="submission" date="2007-06" db="EMBL/GenBank/DDBJ databases">
        <title>Complete sequence of Methanococcus maripaludis C7.</title>
        <authorList>
            <consortium name="US DOE Joint Genome Institute"/>
            <person name="Copeland A."/>
            <person name="Lucas S."/>
            <person name="Lapidus A."/>
            <person name="Barry K."/>
            <person name="Glavina del Rio T."/>
            <person name="Dalin E."/>
            <person name="Tice H."/>
            <person name="Pitluck S."/>
            <person name="Clum A."/>
            <person name="Schmutz J."/>
            <person name="Larimer F."/>
            <person name="Land M."/>
            <person name="Hauser L."/>
            <person name="Kyrpides N."/>
            <person name="Anderson I."/>
            <person name="Sieprawska-Lupa M."/>
            <person name="Whitman W.B."/>
            <person name="Richardson P."/>
        </authorList>
    </citation>
    <scope>NUCLEOTIDE SEQUENCE [LARGE SCALE GENOMIC DNA]</scope>
    <source>
        <strain>C7 / ATCC BAA-1331</strain>
    </source>
</reference>
<accession>A6VGH7</accession>
<gene>
    <name evidence="1" type="primary">bioB</name>
    <name type="ordered locus">MmarC7_0484</name>
</gene>
<name>BIOB_METM7</name>
<keyword id="KW-0001">2Fe-2S</keyword>
<keyword id="KW-0004">4Fe-4S</keyword>
<keyword id="KW-0093">Biotin biosynthesis</keyword>
<keyword id="KW-0408">Iron</keyword>
<keyword id="KW-0411">Iron-sulfur</keyword>
<keyword id="KW-0479">Metal-binding</keyword>
<keyword id="KW-0949">S-adenosyl-L-methionine</keyword>
<keyword id="KW-0808">Transferase</keyword>
<organism>
    <name type="scientific">Methanococcus maripaludis (strain C7 / ATCC BAA-1331)</name>
    <dbReference type="NCBI Taxonomy" id="426368"/>
    <lineage>
        <taxon>Archaea</taxon>
        <taxon>Methanobacteriati</taxon>
        <taxon>Methanobacteriota</taxon>
        <taxon>Methanomada group</taxon>
        <taxon>Methanococci</taxon>
        <taxon>Methanococcales</taxon>
        <taxon>Methanococcaceae</taxon>
        <taxon>Methanococcus</taxon>
    </lineage>
</organism>
<protein>
    <recommendedName>
        <fullName evidence="1">Biotin synthase</fullName>
        <ecNumber evidence="1">2.8.1.6</ecNumber>
    </recommendedName>
</protein>
<feature type="chain" id="PRO_0000381465" description="Biotin synthase">
    <location>
        <begin position="1"/>
        <end position="327"/>
    </location>
</feature>
<feature type="domain" description="Radical SAM core" evidence="2">
    <location>
        <begin position="49"/>
        <end position="282"/>
    </location>
</feature>
<feature type="binding site" evidence="1">
    <location>
        <position position="67"/>
    </location>
    <ligand>
        <name>[4Fe-4S] cluster</name>
        <dbReference type="ChEBI" id="CHEBI:49883"/>
        <note>4Fe-4S-S-AdoMet</note>
    </ligand>
</feature>
<feature type="binding site" evidence="1">
    <location>
        <position position="71"/>
    </location>
    <ligand>
        <name>[4Fe-4S] cluster</name>
        <dbReference type="ChEBI" id="CHEBI:49883"/>
        <note>4Fe-4S-S-AdoMet</note>
    </ligand>
</feature>
<feature type="binding site" evidence="1">
    <location>
        <position position="74"/>
    </location>
    <ligand>
        <name>[4Fe-4S] cluster</name>
        <dbReference type="ChEBI" id="CHEBI:49883"/>
        <note>4Fe-4S-S-AdoMet</note>
    </ligand>
</feature>
<feature type="binding site" evidence="1">
    <location>
        <position position="110"/>
    </location>
    <ligand>
        <name>[2Fe-2S] cluster</name>
        <dbReference type="ChEBI" id="CHEBI:190135"/>
    </ligand>
</feature>
<feature type="binding site" evidence="1">
    <location>
        <position position="142"/>
    </location>
    <ligand>
        <name>[2Fe-2S] cluster</name>
        <dbReference type="ChEBI" id="CHEBI:190135"/>
    </ligand>
</feature>
<feature type="binding site" evidence="1">
    <location>
        <position position="201"/>
    </location>
    <ligand>
        <name>[2Fe-2S] cluster</name>
        <dbReference type="ChEBI" id="CHEBI:190135"/>
    </ligand>
</feature>
<feature type="binding site" evidence="1">
    <location>
        <position position="277"/>
    </location>
    <ligand>
        <name>[2Fe-2S] cluster</name>
        <dbReference type="ChEBI" id="CHEBI:190135"/>
    </ligand>
</feature>
<comment type="function">
    <text evidence="1">Catalyzes the conversion of dethiobiotin (DTB) to biotin by the insertion of a sulfur atom into dethiobiotin via a radical-based mechanism.</text>
</comment>
<comment type="catalytic activity">
    <reaction evidence="1">
        <text>(4R,5S)-dethiobiotin + (sulfur carrier)-SH + 2 reduced [2Fe-2S]-[ferredoxin] + 2 S-adenosyl-L-methionine = (sulfur carrier)-H + biotin + 2 5'-deoxyadenosine + 2 L-methionine + 2 oxidized [2Fe-2S]-[ferredoxin]</text>
        <dbReference type="Rhea" id="RHEA:22060"/>
        <dbReference type="Rhea" id="RHEA-COMP:10000"/>
        <dbReference type="Rhea" id="RHEA-COMP:10001"/>
        <dbReference type="Rhea" id="RHEA-COMP:14737"/>
        <dbReference type="Rhea" id="RHEA-COMP:14739"/>
        <dbReference type="ChEBI" id="CHEBI:17319"/>
        <dbReference type="ChEBI" id="CHEBI:29917"/>
        <dbReference type="ChEBI" id="CHEBI:33737"/>
        <dbReference type="ChEBI" id="CHEBI:33738"/>
        <dbReference type="ChEBI" id="CHEBI:57586"/>
        <dbReference type="ChEBI" id="CHEBI:57844"/>
        <dbReference type="ChEBI" id="CHEBI:59789"/>
        <dbReference type="ChEBI" id="CHEBI:64428"/>
        <dbReference type="ChEBI" id="CHEBI:149473"/>
        <dbReference type="EC" id="2.8.1.6"/>
    </reaction>
</comment>
<comment type="cofactor">
    <cofactor evidence="1">
        <name>[4Fe-4S] cluster</name>
        <dbReference type="ChEBI" id="CHEBI:49883"/>
    </cofactor>
    <text evidence="1">Binds 1 [4Fe-4S] cluster. The cluster is coordinated with 3 cysteines and an exchangeable S-adenosyl-L-methionine.</text>
</comment>
<comment type="cofactor">
    <cofactor evidence="1">
        <name>[2Fe-2S] cluster</name>
        <dbReference type="ChEBI" id="CHEBI:190135"/>
    </cofactor>
    <text evidence="1">Binds 1 [2Fe-2S] cluster. The cluster is coordinated with 3 cysteines and 1 arginine.</text>
</comment>
<comment type="pathway">
    <text evidence="1">Cofactor biosynthesis; biotin biosynthesis; biotin from 7,8-diaminononanoate: step 2/2.</text>
</comment>
<comment type="subunit">
    <text evidence="1">Homodimer.</text>
</comment>
<comment type="similarity">
    <text evidence="1">Belongs to the radical SAM superfamily. Biotin synthase family.</text>
</comment>
<sequence>MKEIELNSDSLEIYEKSASEKLNKKDLVDLWNLDLKNLLDISYSLKKLFNKEKIDLCSIMNAKSGVCSENCIFCSQSKHNSSKIDTYELKSKEEILKNAKSVEKYSNRFSIVVSGKSVTDLEFENIIESIEEIQNKTKLKVCVSLGLLNKDKLKALKEKNVRIHNNLETSENYFKNICTSHDYIDKIKVILEAKKMGLEMCSGGIFGMGESVADRVDLLLDLKKLDVDSVALNLLNPICGTRIYDKINSGEFIEINHTDALKSICIARIALPKKVIRLCGGREHVLKDMQKYSLYVLDGLMIGNYLTTNGQNIQSDLKMIDEMGFKQ</sequence>
<evidence type="ECO:0000255" key="1">
    <source>
        <dbReference type="HAMAP-Rule" id="MF_01694"/>
    </source>
</evidence>
<evidence type="ECO:0000255" key="2">
    <source>
        <dbReference type="PROSITE-ProRule" id="PRU01266"/>
    </source>
</evidence>
<dbReference type="EC" id="2.8.1.6" evidence="1"/>
<dbReference type="EMBL" id="CP000745">
    <property type="protein sequence ID" value="ABR65553.1"/>
    <property type="molecule type" value="Genomic_DNA"/>
</dbReference>
<dbReference type="SMR" id="A6VGH7"/>
<dbReference type="STRING" id="426368.MmarC7_0484"/>
<dbReference type="KEGG" id="mmz:MmarC7_0484"/>
<dbReference type="eggNOG" id="arCOG00658">
    <property type="taxonomic scope" value="Archaea"/>
</dbReference>
<dbReference type="HOGENOM" id="CLU_033172_2_1_2"/>
<dbReference type="OrthoDB" id="9264at2157"/>
<dbReference type="UniPathway" id="UPA00078">
    <property type="reaction ID" value="UER00162"/>
</dbReference>
<dbReference type="GO" id="GO:0051537">
    <property type="term" value="F:2 iron, 2 sulfur cluster binding"/>
    <property type="evidence" value="ECO:0007669"/>
    <property type="project" value="UniProtKB-KW"/>
</dbReference>
<dbReference type="GO" id="GO:0051539">
    <property type="term" value="F:4 iron, 4 sulfur cluster binding"/>
    <property type="evidence" value="ECO:0007669"/>
    <property type="project" value="UniProtKB-KW"/>
</dbReference>
<dbReference type="GO" id="GO:0004076">
    <property type="term" value="F:biotin synthase activity"/>
    <property type="evidence" value="ECO:0007669"/>
    <property type="project" value="UniProtKB-UniRule"/>
</dbReference>
<dbReference type="GO" id="GO:0005506">
    <property type="term" value="F:iron ion binding"/>
    <property type="evidence" value="ECO:0007669"/>
    <property type="project" value="UniProtKB-UniRule"/>
</dbReference>
<dbReference type="GO" id="GO:0009102">
    <property type="term" value="P:biotin biosynthetic process"/>
    <property type="evidence" value="ECO:0007669"/>
    <property type="project" value="UniProtKB-UniRule"/>
</dbReference>
<dbReference type="FunFam" id="3.20.20.70:FF:000605">
    <property type="match status" value="1"/>
</dbReference>
<dbReference type="Gene3D" id="3.20.20.70">
    <property type="entry name" value="Aldolase class I"/>
    <property type="match status" value="1"/>
</dbReference>
<dbReference type="HAMAP" id="MF_01694">
    <property type="entry name" value="BioB"/>
    <property type="match status" value="1"/>
</dbReference>
<dbReference type="InterPro" id="IPR013785">
    <property type="entry name" value="Aldolase_TIM"/>
</dbReference>
<dbReference type="InterPro" id="IPR010722">
    <property type="entry name" value="BATS_dom"/>
</dbReference>
<dbReference type="InterPro" id="IPR002684">
    <property type="entry name" value="Biotin_synth/BioAB"/>
</dbReference>
<dbReference type="InterPro" id="IPR024177">
    <property type="entry name" value="Biotin_synthase"/>
</dbReference>
<dbReference type="InterPro" id="IPR006638">
    <property type="entry name" value="Elp3/MiaA/NifB-like_rSAM"/>
</dbReference>
<dbReference type="InterPro" id="IPR007197">
    <property type="entry name" value="rSAM"/>
</dbReference>
<dbReference type="NCBIfam" id="TIGR00433">
    <property type="entry name" value="bioB"/>
    <property type="match status" value="1"/>
</dbReference>
<dbReference type="PANTHER" id="PTHR22976">
    <property type="entry name" value="BIOTIN SYNTHASE"/>
    <property type="match status" value="1"/>
</dbReference>
<dbReference type="PANTHER" id="PTHR22976:SF2">
    <property type="entry name" value="BIOTIN SYNTHASE, MITOCHONDRIAL"/>
    <property type="match status" value="1"/>
</dbReference>
<dbReference type="Pfam" id="PF06968">
    <property type="entry name" value="BATS"/>
    <property type="match status" value="1"/>
</dbReference>
<dbReference type="Pfam" id="PF04055">
    <property type="entry name" value="Radical_SAM"/>
    <property type="match status" value="1"/>
</dbReference>
<dbReference type="PIRSF" id="PIRSF001619">
    <property type="entry name" value="Biotin_synth"/>
    <property type="match status" value="1"/>
</dbReference>
<dbReference type="SFLD" id="SFLDG01278">
    <property type="entry name" value="biotin_synthase_like"/>
    <property type="match status" value="1"/>
</dbReference>
<dbReference type="SFLD" id="SFLDS00029">
    <property type="entry name" value="Radical_SAM"/>
    <property type="match status" value="1"/>
</dbReference>
<dbReference type="SMART" id="SM00876">
    <property type="entry name" value="BATS"/>
    <property type="match status" value="1"/>
</dbReference>
<dbReference type="SMART" id="SM00729">
    <property type="entry name" value="Elp3"/>
    <property type="match status" value="1"/>
</dbReference>
<dbReference type="SUPFAM" id="SSF102114">
    <property type="entry name" value="Radical SAM enzymes"/>
    <property type="match status" value="1"/>
</dbReference>
<dbReference type="PROSITE" id="PS51918">
    <property type="entry name" value="RADICAL_SAM"/>
    <property type="match status" value="1"/>
</dbReference>